<sequence>MTEQRTVTNNATHYFYPTVLLFSILLTGGVLTATSFYNKHLRQYKSAKDIPEAIFKKQWLYGKVTSVGDGDNFHFFHTPSGIFGGWGWLRSIPELQTVAFDASVEVPQSVRWWNKLFSAKVANYKSHFMSLHVPYKGRRNLPTISVRLCGVDAPERSHFGKTAQPFSDEALNWLRYKILGQYVWVKPLAVDQYGRCVARVELWSWLKGWQNISIEMLKEGVGVVYEGKVGAEFDNQEDIYLYEELNSKKAKRGLWSQRKFETPGAYKKRT</sequence>
<accession>Q6CMM1</accession>
<reference key="1">
    <citation type="journal article" date="2004" name="Nature">
        <title>Genome evolution in yeasts.</title>
        <authorList>
            <person name="Dujon B."/>
            <person name="Sherman D."/>
            <person name="Fischer G."/>
            <person name="Durrens P."/>
            <person name="Casaregola S."/>
            <person name="Lafontaine I."/>
            <person name="de Montigny J."/>
            <person name="Marck C."/>
            <person name="Neuveglise C."/>
            <person name="Talla E."/>
            <person name="Goffard N."/>
            <person name="Frangeul L."/>
            <person name="Aigle M."/>
            <person name="Anthouard V."/>
            <person name="Babour A."/>
            <person name="Barbe V."/>
            <person name="Barnay S."/>
            <person name="Blanchin S."/>
            <person name="Beckerich J.-M."/>
            <person name="Beyne E."/>
            <person name="Bleykasten C."/>
            <person name="Boisrame A."/>
            <person name="Boyer J."/>
            <person name="Cattolico L."/>
            <person name="Confanioleri F."/>
            <person name="de Daruvar A."/>
            <person name="Despons L."/>
            <person name="Fabre E."/>
            <person name="Fairhead C."/>
            <person name="Ferry-Dumazet H."/>
            <person name="Groppi A."/>
            <person name="Hantraye F."/>
            <person name="Hennequin C."/>
            <person name="Jauniaux N."/>
            <person name="Joyet P."/>
            <person name="Kachouri R."/>
            <person name="Kerrest A."/>
            <person name="Koszul R."/>
            <person name="Lemaire M."/>
            <person name="Lesur I."/>
            <person name="Ma L."/>
            <person name="Muller H."/>
            <person name="Nicaud J.-M."/>
            <person name="Nikolski M."/>
            <person name="Oztas S."/>
            <person name="Ozier-Kalogeropoulos O."/>
            <person name="Pellenz S."/>
            <person name="Potier S."/>
            <person name="Richard G.-F."/>
            <person name="Straub M.-L."/>
            <person name="Suleau A."/>
            <person name="Swennen D."/>
            <person name="Tekaia F."/>
            <person name="Wesolowski-Louvel M."/>
            <person name="Westhof E."/>
            <person name="Wirth B."/>
            <person name="Zeniou-Meyer M."/>
            <person name="Zivanovic Y."/>
            <person name="Bolotin-Fukuhara M."/>
            <person name="Thierry A."/>
            <person name="Bouchier C."/>
            <person name="Caudron B."/>
            <person name="Scarpelli C."/>
            <person name="Gaillardin C."/>
            <person name="Weissenbach J."/>
            <person name="Wincker P."/>
            <person name="Souciet J.-L."/>
        </authorList>
    </citation>
    <scope>NUCLEOTIDE SEQUENCE [LARGE SCALE GENOMIC DNA]</scope>
    <source>
        <strain>ATCC 8585 / CBS 2359 / DSM 70799 / NBRC 1267 / NRRL Y-1140 / WM37</strain>
    </source>
</reference>
<organism>
    <name type="scientific">Kluyveromyces lactis (strain ATCC 8585 / CBS 2359 / DSM 70799 / NBRC 1267 / NRRL Y-1140 / WM37)</name>
    <name type="common">Yeast</name>
    <name type="synonym">Candida sphaerica</name>
    <dbReference type="NCBI Taxonomy" id="284590"/>
    <lineage>
        <taxon>Eukaryota</taxon>
        <taxon>Fungi</taxon>
        <taxon>Dikarya</taxon>
        <taxon>Ascomycota</taxon>
        <taxon>Saccharomycotina</taxon>
        <taxon>Saccharomycetes</taxon>
        <taxon>Saccharomycetales</taxon>
        <taxon>Saccharomycetaceae</taxon>
        <taxon>Kluyveromyces</taxon>
    </lineage>
</organism>
<protein>
    <recommendedName>
        <fullName>Probable endonuclease LCL3</fullName>
        <ecNumber>3.1.-.-</ecNumber>
    </recommendedName>
</protein>
<gene>
    <name type="primary">LCL3</name>
    <name type="ordered locus">KLLA0E19163g</name>
</gene>
<evidence type="ECO:0000250" key="1"/>
<evidence type="ECO:0000255" key="2"/>
<evidence type="ECO:0000255" key="3">
    <source>
        <dbReference type="PROSITE-ProRule" id="PRU00272"/>
    </source>
</evidence>
<evidence type="ECO:0000305" key="4"/>
<feature type="chain" id="PRO_0000408662" description="Probable endonuclease LCL3">
    <location>
        <begin position="1"/>
        <end position="270"/>
    </location>
</feature>
<feature type="transmembrane region" description="Helical" evidence="2">
    <location>
        <begin position="15"/>
        <end position="37"/>
    </location>
</feature>
<feature type="domain" description="TNase-like" evidence="3">
    <location>
        <begin position="58"/>
        <end position="257"/>
    </location>
</feature>
<feature type="active site" evidence="3">
    <location>
        <position position="147"/>
    </location>
</feature>
<feature type="active site" evidence="3">
    <location>
        <position position="155"/>
    </location>
</feature>
<feature type="active site" evidence="3">
    <location>
        <position position="195"/>
    </location>
</feature>
<feature type="binding site" evidence="3">
    <location>
        <position position="152"/>
    </location>
    <ligand>
        <name>Ca(2+)</name>
        <dbReference type="ChEBI" id="CHEBI:29108"/>
    </ligand>
</feature>
<name>LCL3_KLULA</name>
<dbReference type="EC" id="3.1.-.-"/>
<dbReference type="EMBL" id="CR382125">
    <property type="protein sequence ID" value="CAG99905.1"/>
    <property type="molecule type" value="Genomic_DNA"/>
</dbReference>
<dbReference type="RefSeq" id="XP_454818.1">
    <property type="nucleotide sequence ID" value="XM_454818.1"/>
</dbReference>
<dbReference type="FunCoup" id="Q6CMM1">
    <property type="interactions" value="23"/>
</dbReference>
<dbReference type="STRING" id="284590.Q6CMM1"/>
<dbReference type="PaxDb" id="284590-Q6CMM1"/>
<dbReference type="KEGG" id="kla:KLLA0_E19163g"/>
<dbReference type="eggNOG" id="ENOG502S1U4">
    <property type="taxonomic scope" value="Eukaryota"/>
</dbReference>
<dbReference type="HOGENOM" id="CLU_046484_0_1_1"/>
<dbReference type="InParanoid" id="Q6CMM1"/>
<dbReference type="OMA" id="IYHTPGG"/>
<dbReference type="Proteomes" id="UP000000598">
    <property type="component" value="Chromosome E"/>
</dbReference>
<dbReference type="GO" id="GO:0016020">
    <property type="term" value="C:membrane"/>
    <property type="evidence" value="ECO:0007669"/>
    <property type="project" value="UniProtKB-SubCell"/>
</dbReference>
<dbReference type="GO" id="GO:0005739">
    <property type="term" value="C:mitochondrion"/>
    <property type="evidence" value="ECO:0007669"/>
    <property type="project" value="UniProtKB-SubCell"/>
</dbReference>
<dbReference type="GO" id="GO:0004519">
    <property type="term" value="F:endonuclease activity"/>
    <property type="evidence" value="ECO:0007669"/>
    <property type="project" value="UniProtKB-KW"/>
</dbReference>
<dbReference type="GO" id="GO:0046872">
    <property type="term" value="F:metal ion binding"/>
    <property type="evidence" value="ECO:0007669"/>
    <property type="project" value="UniProtKB-KW"/>
</dbReference>
<dbReference type="Gene3D" id="2.40.50.90">
    <property type="match status" value="1"/>
</dbReference>
<dbReference type="InterPro" id="IPR035437">
    <property type="entry name" value="SNase_OB-fold_sf"/>
</dbReference>
<dbReference type="InterPro" id="IPR016071">
    <property type="entry name" value="Staphylococal_nuclease_OB-fold"/>
</dbReference>
<dbReference type="PANTHER" id="PTHR12302">
    <property type="entry name" value="EBNA2 BINDING PROTEIN P100"/>
    <property type="match status" value="1"/>
</dbReference>
<dbReference type="PANTHER" id="PTHR12302:SF3">
    <property type="entry name" value="SERINE_THREONINE-PROTEIN KINASE 31"/>
    <property type="match status" value="1"/>
</dbReference>
<dbReference type="Pfam" id="PF00565">
    <property type="entry name" value="SNase"/>
    <property type="match status" value="1"/>
</dbReference>
<dbReference type="SMART" id="SM00318">
    <property type="entry name" value="SNc"/>
    <property type="match status" value="1"/>
</dbReference>
<dbReference type="SUPFAM" id="SSF50199">
    <property type="entry name" value="Staphylococcal nuclease"/>
    <property type="match status" value="1"/>
</dbReference>
<dbReference type="PROSITE" id="PS50830">
    <property type="entry name" value="TNASE_3"/>
    <property type="match status" value="1"/>
</dbReference>
<keyword id="KW-0106">Calcium</keyword>
<keyword id="KW-0255">Endonuclease</keyword>
<keyword id="KW-0378">Hydrolase</keyword>
<keyword id="KW-0472">Membrane</keyword>
<keyword id="KW-0479">Metal-binding</keyword>
<keyword id="KW-0496">Mitochondrion</keyword>
<keyword id="KW-0540">Nuclease</keyword>
<keyword id="KW-1185">Reference proteome</keyword>
<keyword id="KW-0812">Transmembrane</keyword>
<keyword id="KW-1133">Transmembrane helix</keyword>
<proteinExistence type="inferred from homology"/>
<comment type="subcellular location">
    <subcellularLocation>
        <location>Mitochondrion</location>
    </subcellularLocation>
    <subcellularLocation>
        <location evidence="1">Membrane</location>
        <topology evidence="1">Single-pass membrane protein</topology>
    </subcellularLocation>
</comment>
<comment type="similarity">
    <text evidence="4">Belongs to the LCL3 family.</text>
</comment>